<proteinExistence type="inferred from homology"/>
<name>LIVG_ECOLI</name>
<protein>
    <recommendedName>
        <fullName>High-affinity branched-chain amino acid transport ATP-binding protein LivG</fullName>
    </recommendedName>
    <alternativeName>
        <fullName>LIV-I protein G</fullName>
    </alternativeName>
</protein>
<dbReference type="EMBL" id="J05516">
    <property type="protein sequence ID" value="AAA83886.1"/>
    <property type="molecule type" value="Genomic_DNA"/>
</dbReference>
<dbReference type="EMBL" id="U00039">
    <property type="protein sequence ID" value="AAB18430.1"/>
    <property type="molecule type" value="Genomic_DNA"/>
</dbReference>
<dbReference type="EMBL" id="U00096">
    <property type="protein sequence ID" value="AAC76480.1"/>
    <property type="molecule type" value="Genomic_DNA"/>
</dbReference>
<dbReference type="EMBL" id="AP009048">
    <property type="protein sequence ID" value="BAE77838.1"/>
    <property type="molecule type" value="Genomic_DNA"/>
</dbReference>
<dbReference type="PIR" id="F37074">
    <property type="entry name" value="F37074"/>
</dbReference>
<dbReference type="RefSeq" id="NP_417912.1">
    <property type="nucleotide sequence ID" value="NC_000913.3"/>
</dbReference>
<dbReference type="RefSeq" id="WP_000082101.1">
    <property type="nucleotide sequence ID" value="NZ_STEB01000004.1"/>
</dbReference>
<dbReference type="SMR" id="P0A9S7"/>
<dbReference type="BioGRID" id="4261119">
    <property type="interactions" value="388"/>
</dbReference>
<dbReference type="ComplexPortal" id="CPX-4316">
    <property type="entry name" value="Branched chain amino acid ABC transporter complex"/>
</dbReference>
<dbReference type="ComplexPortal" id="CPX-4317">
    <property type="entry name" value="Branched chain amino acid, leucine-specific ABC transporter complex"/>
</dbReference>
<dbReference type="FunCoup" id="P0A9S7">
    <property type="interactions" value="508"/>
</dbReference>
<dbReference type="IntAct" id="P0A9S7">
    <property type="interactions" value="6"/>
</dbReference>
<dbReference type="STRING" id="511145.b3455"/>
<dbReference type="TCDB" id="3.A.1.4.1">
    <property type="family name" value="the atp-binding cassette (abc) superfamily"/>
</dbReference>
<dbReference type="PaxDb" id="511145-b3455"/>
<dbReference type="EnsemblBacteria" id="AAC76480">
    <property type="protein sequence ID" value="AAC76480"/>
    <property type="gene ID" value="b3455"/>
</dbReference>
<dbReference type="GeneID" id="89518287"/>
<dbReference type="GeneID" id="947967"/>
<dbReference type="KEGG" id="ecj:JW3420"/>
<dbReference type="KEGG" id="eco:b3455"/>
<dbReference type="KEGG" id="ecoc:C3026_18715"/>
<dbReference type="PATRIC" id="fig|511145.12.peg.3553"/>
<dbReference type="EchoBASE" id="EB0532"/>
<dbReference type="eggNOG" id="COG0411">
    <property type="taxonomic scope" value="Bacteria"/>
</dbReference>
<dbReference type="HOGENOM" id="CLU_000604_1_2_6"/>
<dbReference type="InParanoid" id="P0A9S7"/>
<dbReference type="OMA" id="EHDMRFI"/>
<dbReference type="OrthoDB" id="9805514at2"/>
<dbReference type="PhylomeDB" id="P0A9S7"/>
<dbReference type="BioCyc" id="EcoCyc:LIVG-MONOMER"/>
<dbReference type="BioCyc" id="MetaCyc:LIVG-MONOMER"/>
<dbReference type="PRO" id="PR:P0A9S7"/>
<dbReference type="Proteomes" id="UP000000625">
    <property type="component" value="Chromosome"/>
</dbReference>
<dbReference type="GO" id="GO:0055052">
    <property type="term" value="C:ATP-binding cassette (ABC) transporter complex, substrate-binding subunit-containing"/>
    <property type="evidence" value="ECO:0000303"/>
    <property type="project" value="ComplexPortal"/>
</dbReference>
<dbReference type="GO" id="GO:0016020">
    <property type="term" value="C:membrane"/>
    <property type="evidence" value="ECO:0000314"/>
    <property type="project" value="EcoCyc"/>
</dbReference>
<dbReference type="GO" id="GO:0005886">
    <property type="term" value="C:plasma membrane"/>
    <property type="evidence" value="ECO:0000318"/>
    <property type="project" value="GO_Central"/>
</dbReference>
<dbReference type="GO" id="GO:0005524">
    <property type="term" value="F:ATP binding"/>
    <property type="evidence" value="ECO:0000255"/>
    <property type="project" value="EcoCyc"/>
</dbReference>
<dbReference type="GO" id="GO:0016887">
    <property type="term" value="F:ATP hydrolysis activity"/>
    <property type="evidence" value="ECO:0007669"/>
    <property type="project" value="InterPro"/>
</dbReference>
<dbReference type="GO" id="GO:0015658">
    <property type="term" value="F:branched-chain amino acid transmembrane transporter activity"/>
    <property type="evidence" value="ECO:0000314"/>
    <property type="project" value="EcoCyc"/>
</dbReference>
<dbReference type="GO" id="GO:0015188">
    <property type="term" value="F:L-isoleucine transmembrane transporter activity"/>
    <property type="evidence" value="ECO:0000314"/>
    <property type="project" value="EcoCyc"/>
</dbReference>
<dbReference type="GO" id="GO:0015190">
    <property type="term" value="F:L-leucine transmembrane transporter activity"/>
    <property type="evidence" value="ECO:0000269"/>
    <property type="project" value="EcoCyc"/>
</dbReference>
<dbReference type="GO" id="GO:0015192">
    <property type="term" value="F:L-phenylalanine transmembrane transporter activity"/>
    <property type="evidence" value="ECO:0000314"/>
    <property type="project" value="EcoCyc"/>
</dbReference>
<dbReference type="GO" id="GO:0005304">
    <property type="term" value="F:L-valine transmembrane transporter activity"/>
    <property type="evidence" value="ECO:0000314"/>
    <property type="project" value="EcoCyc"/>
</dbReference>
<dbReference type="GO" id="GO:0015803">
    <property type="term" value="P:branched-chain amino acid transport"/>
    <property type="evidence" value="ECO:0000314"/>
    <property type="project" value="EcoCyc"/>
</dbReference>
<dbReference type="GO" id="GO:0042941">
    <property type="term" value="P:D-alanine transmembrane transport"/>
    <property type="evidence" value="ECO:0000318"/>
    <property type="project" value="GO_Central"/>
</dbReference>
<dbReference type="GO" id="GO:1903714">
    <property type="term" value="P:isoleucine transmembrane transport"/>
    <property type="evidence" value="ECO:0000314"/>
    <property type="project" value="EcoCyc"/>
</dbReference>
<dbReference type="GO" id="GO:0015808">
    <property type="term" value="P:L-alanine transport"/>
    <property type="evidence" value="ECO:0000318"/>
    <property type="project" value="GO_Central"/>
</dbReference>
<dbReference type="GO" id="GO:1903806">
    <property type="term" value="P:L-isoleucine import across plasma membrane"/>
    <property type="evidence" value="ECO:0000318"/>
    <property type="project" value="GO_Central"/>
</dbReference>
<dbReference type="GO" id="GO:1903805">
    <property type="term" value="P:L-valine import across plasma membrane"/>
    <property type="evidence" value="ECO:0000318"/>
    <property type="project" value="GO_Central"/>
</dbReference>
<dbReference type="GO" id="GO:1903785">
    <property type="term" value="P:L-valine transmembrane transport"/>
    <property type="evidence" value="ECO:0000314"/>
    <property type="project" value="EcoCyc"/>
</dbReference>
<dbReference type="GO" id="GO:0015823">
    <property type="term" value="P:phenylalanine transport"/>
    <property type="evidence" value="ECO:0000314"/>
    <property type="project" value="EcoCyc"/>
</dbReference>
<dbReference type="CDD" id="cd03219">
    <property type="entry name" value="ABC_Mj1267_LivG_branched"/>
    <property type="match status" value="1"/>
</dbReference>
<dbReference type="FunFam" id="3.40.50.300:FF:000317">
    <property type="entry name" value="Amino acid ABC transporter ATP-binding protein"/>
    <property type="match status" value="1"/>
</dbReference>
<dbReference type="Gene3D" id="3.40.50.300">
    <property type="entry name" value="P-loop containing nucleotide triphosphate hydrolases"/>
    <property type="match status" value="1"/>
</dbReference>
<dbReference type="InterPro" id="IPR003593">
    <property type="entry name" value="AAA+_ATPase"/>
</dbReference>
<dbReference type="InterPro" id="IPR051120">
    <property type="entry name" value="ABC_AA/LPS_Transport"/>
</dbReference>
<dbReference type="InterPro" id="IPR003439">
    <property type="entry name" value="ABC_transporter-like_ATP-bd"/>
</dbReference>
<dbReference type="InterPro" id="IPR017871">
    <property type="entry name" value="ABC_transporter-like_CS"/>
</dbReference>
<dbReference type="InterPro" id="IPR032823">
    <property type="entry name" value="BCA_ABC_TP_C"/>
</dbReference>
<dbReference type="InterPro" id="IPR027417">
    <property type="entry name" value="P-loop_NTPase"/>
</dbReference>
<dbReference type="NCBIfam" id="NF008449">
    <property type="entry name" value="PRK11300.1"/>
    <property type="match status" value="1"/>
</dbReference>
<dbReference type="PANTHER" id="PTHR45772">
    <property type="entry name" value="CONSERVED COMPONENT OF ABC TRANSPORTER FOR NATURAL AMINO ACIDS-RELATED"/>
    <property type="match status" value="1"/>
</dbReference>
<dbReference type="PANTHER" id="PTHR45772:SF11">
    <property type="entry name" value="HIGH-AFFINITY BRANCHED-CHAIN AMINO ACID TRANSPORT ATP-BINDING PROTEIN LIVG"/>
    <property type="match status" value="1"/>
</dbReference>
<dbReference type="Pfam" id="PF00005">
    <property type="entry name" value="ABC_tran"/>
    <property type="match status" value="1"/>
</dbReference>
<dbReference type="Pfam" id="PF12399">
    <property type="entry name" value="BCA_ABC_TP_C"/>
    <property type="match status" value="1"/>
</dbReference>
<dbReference type="SMART" id="SM00382">
    <property type="entry name" value="AAA"/>
    <property type="match status" value="1"/>
</dbReference>
<dbReference type="SUPFAM" id="SSF52540">
    <property type="entry name" value="P-loop containing nucleoside triphosphate hydrolases"/>
    <property type="match status" value="1"/>
</dbReference>
<dbReference type="PROSITE" id="PS00211">
    <property type="entry name" value="ABC_TRANSPORTER_1"/>
    <property type="match status" value="1"/>
</dbReference>
<dbReference type="PROSITE" id="PS50893">
    <property type="entry name" value="ABC_TRANSPORTER_2"/>
    <property type="match status" value="1"/>
</dbReference>
<organism>
    <name type="scientific">Escherichia coli (strain K12)</name>
    <dbReference type="NCBI Taxonomy" id="83333"/>
    <lineage>
        <taxon>Bacteria</taxon>
        <taxon>Pseudomonadati</taxon>
        <taxon>Pseudomonadota</taxon>
        <taxon>Gammaproteobacteria</taxon>
        <taxon>Enterobacterales</taxon>
        <taxon>Enterobacteriaceae</taxon>
        <taxon>Escherichia</taxon>
    </lineage>
</organism>
<feature type="chain" id="PRO_0000092406" description="High-affinity branched-chain amino acid transport ATP-binding protein LivG">
    <location>
        <begin position="1"/>
        <end position="255"/>
    </location>
</feature>
<feature type="domain" description="ABC transporter" evidence="1">
    <location>
        <begin position="6"/>
        <end position="254"/>
    </location>
</feature>
<feature type="binding site" evidence="1">
    <location>
        <begin position="38"/>
        <end position="45"/>
    </location>
    <ligand>
        <name>ATP</name>
        <dbReference type="ChEBI" id="CHEBI:30616"/>
    </ligand>
</feature>
<feature type="sequence conflict" description="In Ref. 1; AAA83886." evidence="2" ref="1">
    <original>A</original>
    <variation>R</variation>
    <location>
        <position position="130"/>
    </location>
</feature>
<feature type="sequence conflict" description="In Ref. 1; AAA83886." evidence="2" ref="1">
    <original>T</original>
    <variation>S</variation>
    <location>
        <position position="237"/>
    </location>
</feature>
<gene>
    <name type="primary">livG</name>
    <name type="ordered locus">b3455</name>
    <name type="ordered locus">JW3420</name>
</gene>
<sequence>MSQPLLSVNGLMMRFGGLLAVNNVNLELYPQEIVSLIGPNGAGKTTVFNCLTGFYKPTGGTILLRDQHLEGLPGQQIARMGVVRTFQHVRLFREMTVIENLLVAQHQQLKTGLFSGLLKTPSFRRAQSEALDRAATWLERIGLLEHANRQASNLAYGDQRRLEIARCMVTQPEILMLDEPAAGLNPKETKELDELIAELRNHHNTTILLIEHDMKLVMGISDRIYVVNQGTPLANGTPEQIRNNPDVIRAYLGEA</sequence>
<comment type="function">
    <text>Component of the leucine-specific transport system.</text>
</comment>
<comment type="similarity">
    <text evidence="2">Belongs to the ABC transporter superfamily.</text>
</comment>
<accession>P0A9S7</accession>
<accession>P22730</accession>
<accession>Q2M7B8</accession>
<evidence type="ECO:0000255" key="1">
    <source>
        <dbReference type="PROSITE-ProRule" id="PRU00434"/>
    </source>
</evidence>
<evidence type="ECO:0000305" key="2"/>
<keyword id="KW-0029">Amino-acid transport</keyword>
<keyword id="KW-0067">ATP-binding</keyword>
<keyword id="KW-0547">Nucleotide-binding</keyword>
<keyword id="KW-1185">Reference proteome</keyword>
<keyword id="KW-0813">Transport</keyword>
<reference key="1">
    <citation type="journal article" date="1990" name="J. Biol. Chem.">
        <title>Nucleotide sequence and genetic characterization reveal six essential genes for the LIV-I and LS transport systems of Escherichia coli.</title>
        <authorList>
            <person name="Adams M.D."/>
            <person name="Wagner L.M."/>
            <person name="Graddis T.J."/>
            <person name="Landick R."/>
            <person name="Antonucci T.K."/>
            <person name="Gibson A.L."/>
            <person name="Oxender D.L."/>
        </authorList>
    </citation>
    <scope>NUCLEOTIDE SEQUENCE [GENOMIC DNA]</scope>
</reference>
<reference key="2">
    <citation type="journal article" date="1994" name="Nucleic Acids Res.">
        <title>Analysis of the Escherichia coli genome. V. DNA sequence of the region from 76.0 to 81.5 minutes.</title>
        <authorList>
            <person name="Sofia H.J."/>
            <person name="Burland V."/>
            <person name="Daniels D.L."/>
            <person name="Plunkett G. III"/>
            <person name="Blattner F.R."/>
        </authorList>
    </citation>
    <scope>NUCLEOTIDE SEQUENCE [LARGE SCALE GENOMIC DNA]</scope>
    <source>
        <strain>K12 / MG1655 / ATCC 47076</strain>
    </source>
</reference>
<reference key="3">
    <citation type="journal article" date="1997" name="Science">
        <title>The complete genome sequence of Escherichia coli K-12.</title>
        <authorList>
            <person name="Blattner F.R."/>
            <person name="Plunkett G. III"/>
            <person name="Bloch C.A."/>
            <person name="Perna N.T."/>
            <person name="Burland V."/>
            <person name="Riley M."/>
            <person name="Collado-Vides J."/>
            <person name="Glasner J.D."/>
            <person name="Rode C.K."/>
            <person name="Mayhew G.F."/>
            <person name="Gregor J."/>
            <person name="Davis N.W."/>
            <person name="Kirkpatrick H.A."/>
            <person name="Goeden M.A."/>
            <person name="Rose D.J."/>
            <person name="Mau B."/>
            <person name="Shao Y."/>
        </authorList>
    </citation>
    <scope>NUCLEOTIDE SEQUENCE [LARGE SCALE GENOMIC DNA]</scope>
    <source>
        <strain>K12 / MG1655 / ATCC 47076</strain>
    </source>
</reference>
<reference key="4">
    <citation type="journal article" date="2006" name="Mol. Syst. Biol.">
        <title>Highly accurate genome sequences of Escherichia coli K-12 strains MG1655 and W3110.</title>
        <authorList>
            <person name="Hayashi K."/>
            <person name="Morooka N."/>
            <person name="Yamamoto Y."/>
            <person name="Fujita K."/>
            <person name="Isono K."/>
            <person name="Choi S."/>
            <person name="Ohtsubo E."/>
            <person name="Baba T."/>
            <person name="Wanner B.L."/>
            <person name="Mori H."/>
            <person name="Horiuchi T."/>
        </authorList>
    </citation>
    <scope>NUCLEOTIDE SEQUENCE [LARGE SCALE GENOMIC DNA]</scope>
    <source>
        <strain>K12 / W3110 / ATCC 27325 / DSM 5911</strain>
    </source>
</reference>